<keyword id="KW-0067">ATP-binding</keyword>
<keyword id="KW-0963">Cytoplasm</keyword>
<keyword id="KW-0418">Kinase</keyword>
<keyword id="KW-0547">Nucleotide-binding</keyword>
<keyword id="KW-0665">Pyrimidine biosynthesis</keyword>
<keyword id="KW-0808">Transferase</keyword>
<sequence length="237" mass="25329">MPNAYKRVLLKLSGEALMGDDAFGINRATIERMVADIAEVVRLGTQLAVVIGGGNIFRGVAGGAAGMDRATADYMGMLATMMNALALQDAMRHAGIEARVQSALRMDQVVEPYIRPRAIRQLEEGKVVIFAAGTGNPFFTTDTAAALRGSEVGAEVVLKATKVDGVYSADPKKDPSATRYSSISFDEAIGRNLQVMDATAFALCRDQKLPIRVFSINKPGALKRIVQGEDEGTLVHV</sequence>
<name>PYRH_BURM7</name>
<gene>
    <name evidence="1" type="primary">pyrH</name>
    <name type="ordered locus">BMA10247_1326</name>
</gene>
<protein>
    <recommendedName>
        <fullName evidence="1">Uridylate kinase</fullName>
        <shortName evidence="1">UK</shortName>
        <ecNumber evidence="1">2.7.4.22</ecNumber>
    </recommendedName>
    <alternativeName>
        <fullName evidence="1">Uridine monophosphate kinase</fullName>
        <shortName evidence="1">UMP kinase</shortName>
        <shortName evidence="1">UMPK</shortName>
    </alternativeName>
</protein>
<accession>A3MKU1</accession>
<evidence type="ECO:0000255" key="1">
    <source>
        <dbReference type="HAMAP-Rule" id="MF_01220"/>
    </source>
</evidence>
<organism>
    <name type="scientific">Burkholderia mallei (strain NCTC 10247)</name>
    <dbReference type="NCBI Taxonomy" id="320389"/>
    <lineage>
        <taxon>Bacteria</taxon>
        <taxon>Pseudomonadati</taxon>
        <taxon>Pseudomonadota</taxon>
        <taxon>Betaproteobacteria</taxon>
        <taxon>Burkholderiales</taxon>
        <taxon>Burkholderiaceae</taxon>
        <taxon>Burkholderia</taxon>
        <taxon>pseudomallei group</taxon>
    </lineage>
</organism>
<dbReference type="EC" id="2.7.4.22" evidence="1"/>
<dbReference type="EMBL" id="CP000548">
    <property type="protein sequence ID" value="ABO05786.1"/>
    <property type="molecule type" value="Genomic_DNA"/>
</dbReference>
<dbReference type="RefSeq" id="WP_004193606.1">
    <property type="nucleotide sequence ID" value="NZ_CP007802.1"/>
</dbReference>
<dbReference type="SMR" id="A3MKU1"/>
<dbReference type="GeneID" id="93060698"/>
<dbReference type="KEGG" id="bmaz:BM44_1800"/>
<dbReference type="KEGG" id="bmn:BMA10247_1326"/>
<dbReference type="PATRIC" id="fig|320389.8.peg.2014"/>
<dbReference type="UniPathway" id="UPA00159">
    <property type="reaction ID" value="UER00275"/>
</dbReference>
<dbReference type="GO" id="GO:0005829">
    <property type="term" value="C:cytosol"/>
    <property type="evidence" value="ECO:0007669"/>
    <property type="project" value="TreeGrafter"/>
</dbReference>
<dbReference type="GO" id="GO:0005524">
    <property type="term" value="F:ATP binding"/>
    <property type="evidence" value="ECO:0007669"/>
    <property type="project" value="UniProtKB-KW"/>
</dbReference>
<dbReference type="GO" id="GO:0033862">
    <property type="term" value="F:UMP kinase activity"/>
    <property type="evidence" value="ECO:0007669"/>
    <property type="project" value="UniProtKB-EC"/>
</dbReference>
<dbReference type="GO" id="GO:0044210">
    <property type="term" value="P:'de novo' CTP biosynthetic process"/>
    <property type="evidence" value="ECO:0007669"/>
    <property type="project" value="UniProtKB-UniRule"/>
</dbReference>
<dbReference type="GO" id="GO:0006225">
    <property type="term" value="P:UDP biosynthetic process"/>
    <property type="evidence" value="ECO:0007669"/>
    <property type="project" value="TreeGrafter"/>
</dbReference>
<dbReference type="CDD" id="cd04254">
    <property type="entry name" value="AAK_UMPK-PyrH-Ec"/>
    <property type="match status" value="1"/>
</dbReference>
<dbReference type="FunFam" id="3.40.1160.10:FF:000001">
    <property type="entry name" value="Uridylate kinase"/>
    <property type="match status" value="1"/>
</dbReference>
<dbReference type="Gene3D" id="3.40.1160.10">
    <property type="entry name" value="Acetylglutamate kinase-like"/>
    <property type="match status" value="1"/>
</dbReference>
<dbReference type="HAMAP" id="MF_01220_B">
    <property type="entry name" value="PyrH_B"/>
    <property type="match status" value="1"/>
</dbReference>
<dbReference type="InterPro" id="IPR036393">
    <property type="entry name" value="AceGlu_kinase-like_sf"/>
</dbReference>
<dbReference type="InterPro" id="IPR001048">
    <property type="entry name" value="Asp/Glu/Uridylate_kinase"/>
</dbReference>
<dbReference type="InterPro" id="IPR011817">
    <property type="entry name" value="Uridylate_kinase"/>
</dbReference>
<dbReference type="InterPro" id="IPR015963">
    <property type="entry name" value="Uridylate_kinase_bac"/>
</dbReference>
<dbReference type="NCBIfam" id="TIGR02075">
    <property type="entry name" value="pyrH_bact"/>
    <property type="match status" value="1"/>
</dbReference>
<dbReference type="PANTHER" id="PTHR42833">
    <property type="entry name" value="URIDYLATE KINASE"/>
    <property type="match status" value="1"/>
</dbReference>
<dbReference type="PANTHER" id="PTHR42833:SF4">
    <property type="entry name" value="URIDYLATE KINASE PUMPKIN, CHLOROPLASTIC"/>
    <property type="match status" value="1"/>
</dbReference>
<dbReference type="Pfam" id="PF00696">
    <property type="entry name" value="AA_kinase"/>
    <property type="match status" value="1"/>
</dbReference>
<dbReference type="PIRSF" id="PIRSF005650">
    <property type="entry name" value="Uridylate_kin"/>
    <property type="match status" value="1"/>
</dbReference>
<dbReference type="SUPFAM" id="SSF53633">
    <property type="entry name" value="Carbamate kinase-like"/>
    <property type="match status" value="1"/>
</dbReference>
<comment type="function">
    <text evidence="1">Catalyzes the reversible phosphorylation of UMP to UDP.</text>
</comment>
<comment type="catalytic activity">
    <reaction evidence="1">
        <text>UMP + ATP = UDP + ADP</text>
        <dbReference type="Rhea" id="RHEA:24400"/>
        <dbReference type="ChEBI" id="CHEBI:30616"/>
        <dbReference type="ChEBI" id="CHEBI:57865"/>
        <dbReference type="ChEBI" id="CHEBI:58223"/>
        <dbReference type="ChEBI" id="CHEBI:456216"/>
        <dbReference type="EC" id="2.7.4.22"/>
    </reaction>
</comment>
<comment type="activity regulation">
    <text evidence="1">Inhibited by UTP.</text>
</comment>
<comment type="pathway">
    <text evidence="1">Pyrimidine metabolism; CTP biosynthesis via de novo pathway; UDP from UMP (UMPK route): step 1/1.</text>
</comment>
<comment type="subunit">
    <text evidence="1">Homohexamer.</text>
</comment>
<comment type="subcellular location">
    <subcellularLocation>
        <location evidence="1">Cytoplasm</location>
    </subcellularLocation>
</comment>
<comment type="similarity">
    <text evidence="1">Belongs to the UMP kinase family.</text>
</comment>
<reference key="1">
    <citation type="journal article" date="2010" name="Genome Biol. Evol.">
        <title>Continuing evolution of Burkholderia mallei through genome reduction and large-scale rearrangements.</title>
        <authorList>
            <person name="Losada L."/>
            <person name="Ronning C.M."/>
            <person name="DeShazer D."/>
            <person name="Woods D."/>
            <person name="Fedorova N."/>
            <person name="Kim H.S."/>
            <person name="Shabalina S.A."/>
            <person name="Pearson T.R."/>
            <person name="Brinkac L."/>
            <person name="Tan P."/>
            <person name="Nandi T."/>
            <person name="Crabtree J."/>
            <person name="Badger J."/>
            <person name="Beckstrom-Sternberg S."/>
            <person name="Saqib M."/>
            <person name="Schutzer S.E."/>
            <person name="Keim P."/>
            <person name="Nierman W.C."/>
        </authorList>
    </citation>
    <scope>NUCLEOTIDE SEQUENCE [LARGE SCALE GENOMIC DNA]</scope>
    <source>
        <strain>NCTC 10247</strain>
    </source>
</reference>
<feature type="chain" id="PRO_0000323810" description="Uridylate kinase">
    <location>
        <begin position="1"/>
        <end position="237"/>
    </location>
</feature>
<feature type="binding site" evidence="1">
    <location>
        <begin position="11"/>
        <end position="14"/>
    </location>
    <ligand>
        <name>ATP</name>
        <dbReference type="ChEBI" id="CHEBI:30616"/>
    </ligand>
</feature>
<feature type="binding site" evidence="1">
    <location>
        <position position="53"/>
    </location>
    <ligand>
        <name>UMP</name>
        <dbReference type="ChEBI" id="CHEBI:57865"/>
    </ligand>
</feature>
<feature type="binding site" evidence="1">
    <location>
        <position position="54"/>
    </location>
    <ligand>
        <name>ATP</name>
        <dbReference type="ChEBI" id="CHEBI:30616"/>
    </ligand>
</feature>
<feature type="binding site" evidence="1">
    <location>
        <position position="58"/>
    </location>
    <ligand>
        <name>ATP</name>
        <dbReference type="ChEBI" id="CHEBI:30616"/>
    </ligand>
</feature>
<feature type="binding site" evidence="1">
    <location>
        <position position="73"/>
    </location>
    <ligand>
        <name>UMP</name>
        <dbReference type="ChEBI" id="CHEBI:57865"/>
    </ligand>
</feature>
<feature type="binding site" evidence="1">
    <location>
        <begin position="134"/>
        <end position="141"/>
    </location>
    <ligand>
        <name>UMP</name>
        <dbReference type="ChEBI" id="CHEBI:57865"/>
    </ligand>
</feature>
<feature type="binding site" evidence="1">
    <location>
        <position position="161"/>
    </location>
    <ligand>
        <name>ATP</name>
        <dbReference type="ChEBI" id="CHEBI:30616"/>
    </ligand>
</feature>
<feature type="binding site" evidence="1">
    <location>
        <position position="167"/>
    </location>
    <ligand>
        <name>ATP</name>
        <dbReference type="ChEBI" id="CHEBI:30616"/>
    </ligand>
</feature>
<feature type="binding site" evidence="1">
    <location>
        <position position="170"/>
    </location>
    <ligand>
        <name>ATP</name>
        <dbReference type="ChEBI" id="CHEBI:30616"/>
    </ligand>
</feature>
<proteinExistence type="inferred from homology"/>